<proteinExistence type="inferred from homology"/>
<dbReference type="EC" id="3.6.5.-" evidence="1"/>
<dbReference type="EMBL" id="CP000394">
    <property type="protein sequence ID" value="ABI62603.1"/>
    <property type="status" value="ALT_INIT"/>
    <property type="molecule type" value="Genomic_DNA"/>
</dbReference>
<dbReference type="RefSeq" id="WP_011632407.1">
    <property type="nucleotide sequence ID" value="NC_008343.2"/>
</dbReference>
<dbReference type="SMR" id="Q0BRE9"/>
<dbReference type="STRING" id="391165.GbCGDNIH1_1705"/>
<dbReference type="KEGG" id="gbe:GbCGDNIH1_1705"/>
<dbReference type="eggNOG" id="COG0536">
    <property type="taxonomic scope" value="Bacteria"/>
</dbReference>
<dbReference type="HOGENOM" id="CLU_011747_2_0_5"/>
<dbReference type="OrthoDB" id="9807318at2"/>
<dbReference type="Proteomes" id="UP000001963">
    <property type="component" value="Chromosome"/>
</dbReference>
<dbReference type="GO" id="GO:0005737">
    <property type="term" value="C:cytoplasm"/>
    <property type="evidence" value="ECO:0007669"/>
    <property type="project" value="UniProtKB-SubCell"/>
</dbReference>
<dbReference type="GO" id="GO:0005525">
    <property type="term" value="F:GTP binding"/>
    <property type="evidence" value="ECO:0007669"/>
    <property type="project" value="UniProtKB-UniRule"/>
</dbReference>
<dbReference type="GO" id="GO:0003924">
    <property type="term" value="F:GTPase activity"/>
    <property type="evidence" value="ECO:0007669"/>
    <property type="project" value="UniProtKB-UniRule"/>
</dbReference>
<dbReference type="GO" id="GO:0000287">
    <property type="term" value="F:magnesium ion binding"/>
    <property type="evidence" value="ECO:0007669"/>
    <property type="project" value="InterPro"/>
</dbReference>
<dbReference type="GO" id="GO:0042254">
    <property type="term" value="P:ribosome biogenesis"/>
    <property type="evidence" value="ECO:0007669"/>
    <property type="project" value="UniProtKB-UniRule"/>
</dbReference>
<dbReference type="CDD" id="cd01898">
    <property type="entry name" value="Obg"/>
    <property type="match status" value="1"/>
</dbReference>
<dbReference type="FunFam" id="2.70.210.12:FF:000001">
    <property type="entry name" value="GTPase Obg"/>
    <property type="match status" value="1"/>
</dbReference>
<dbReference type="Gene3D" id="2.70.210.12">
    <property type="entry name" value="GTP1/OBG domain"/>
    <property type="match status" value="1"/>
</dbReference>
<dbReference type="Gene3D" id="3.40.50.300">
    <property type="entry name" value="P-loop containing nucleotide triphosphate hydrolases"/>
    <property type="match status" value="1"/>
</dbReference>
<dbReference type="HAMAP" id="MF_01454">
    <property type="entry name" value="GTPase_Obg"/>
    <property type="match status" value="1"/>
</dbReference>
<dbReference type="InterPro" id="IPR031167">
    <property type="entry name" value="G_OBG"/>
</dbReference>
<dbReference type="InterPro" id="IPR006073">
    <property type="entry name" value="GTP-bd"/>
</dbReference>
<dbReference type="InterPro" id="IPR014100">
    <property type="entry name" value="GTP-bd_Obg/CgtA"/>
</dbReference>
<dbReference type="InterPro" id="IPR006074">
    <property type="entry name" value="GTP1-OBG_CS"/>
</dbReference>
<dbReference type="InterPro" id="IPR006169">
    <property type="entry name" value="GTP1_OBG_dom"/>
</dbReference>
<dbReference type="InterPro" id="IPR036726">
    <property type="entry name" value="GTP1_OBG_dom_sf"/>
</dbReference>
<dbReference type="InterPro" id="IPR045086">
    <property type="entry name" value="OBG_GTPase"/>
</dbReference>
<dbReference type="InterPro" id="IPR027417">
    <property type="entry name" value="P-loop_NTPase"/>
</dbReference>
<dbReference type="NCBIfam" id="TIGR02729">
    <property type="entry name" value="Obg_CgtA"/>
    <property type="match status" value="1"/>
</dbReference>
<dbReference type="NCBIfam" id="NF008955">
    <property type="entry name" value="PRK12297.1"/>
    <property type="match status" value="1"/>
</dbReference>
<dbReference type="NCBIfam" id="NF008956">
    <property type="entry name" value="PRK12299.1"/>
    <property type="match status" value="1"/>
</dbReference>
<dbReference type="PANTHER" id="PTHR11702">
    <property type="entry name" value="DEVELOPMENTALLY REGULATED GTP-BINDING PROTEIN-RELATED"/>
    <property type="match status" value="1"/>
</dbReference>
<dbReference type="PANTHER" id="PTHR11702:SF31">
    <property type="entry name" value="MITOCHONDRIAL RIBOSOME-ASSOCIATED GTPASE 2"/>
    <property type="match status" value="1"/>
</dbReference>
<dbReference type="Pfam" id="PF01018">
    <property type="entry name" value="GTP1_OBG"/>
    <property type="match status" value="1"/>
</dbReference>
<dbReference type="Pfam" id="PF01926">
    <property type="entry name" value="MMR_HSR1"/>
    <property type="match status" value="1"/>
</dbReference>
<dbReference type="PIRSF" id="PIRSF002401">
    <property type="entry name" value="GTP_bd_Obg/CgtA"/>
    <property type="match status" value="1"/>
</dbReference>
<dbReference type="PRINTS" id="PR00326">
    <property type="entry name" value="GTP1OBG"/>
</dbReference>
<dbReference type="SUPFAM" id="SSF82051">
    <property type="entry name" value="Obg GTP-binding protein N-terminal domain"/>
    <property type="match status" value="1"/>
</dbReference>
<dbReference type="SUPFAM" id="SSF52540">
    <property type="entry name" value="P-loop containing nucleoside triphosphate hydrolases"/>
    <property type="match status" value="1"/>
</dbReference>
<dbReference type="PROSITE" id="PS51710">
    <property type="entry name" value="G_OBG"/>
    <property type="match status" value="1"/>
</dbReference>
<dbReference type="PROSITE" id="PS00905">
    <property type="entry name" value="GTP1_OBG"/>
    <property type="match status" value="1"/>
</dbReference>
<dbReference type="PROSITE" id="PS51883">
    <property type="entry name" value="OBG"/>
    <property type="match status" value="1"/>
</dbReference>
<evidence type="ECO:0000255" key="1">
    <source>
        <dbReference type="HAMAP-Rule" id="MF_01454"/>
    </source>
</evidence>
<evidence type="ECO:0000255" key="2">
    <source>
        <dbReference type="PROSITE-ProRule" id="PRU01231"/>
    </source>
</evidence>
<evidence type="ECO:0000305" key="3"/>
<comment type="function">
    <text evidence="1">An essential GTPase which binds GTP, GDP and possibly (p)ppGpp with moderate affinity, with high nucleotide exchange rates and a fairly low GTP hydrolysis rate. Plays a role in control of the cell cycle, stress response, ribosome biogenesis and in those bacteria that undergo differentiation, in morphogenesis control.</text>
</comment>
<comment type="cofactor">
    <cofactor evidence="1">
        <name>Mg(2+)</name>
        <dbReference type="ChEBI" id="CHEBI:18420"/>
    </cofactor>
</comment>
<comment type="subunit">
    <text evidence="1">Monomer.</text>
</comment>
<comment type="subcellular location">
    <subcellularLocation>
        <location evidence="1">Cytoplasm</location>
    </subcellularLocation>
</comment>
<comment type="similarity">
    <text evidence="1">Belongs to the TRAFAC class OBG-HflX-like GTPase superfamily. OBG GTPase family.</text>
</comment>
<comment type="sequence caution" evidence="3">
    <conflict type="erroneous initiation">
        <sequence resource="EMBL-CDS" id="ABI62603"/>
    </conflict>
    <text>Extended N-terminus.</text>
</comment>
<feature type="chain" id="PRO_0000385960" description="GTPase Obg">
    <location>
        <begin position="1"/>
        <end position="343"/>
    </location>
</feature>
<feature type="domain" description="Obg" evidence="2">
    <location>
        <begin position="1"/>
        <end position="159"/>
    </location>
</feature>
<feature type="domain" description="OBG-type G" evidence="1">
    <location>
        <begin position="160"/>
        <end position="328"/>
    </location>
</feature>
<feature type="binding site" evidence="1">
    <location>
        <begin position="166"/>
        <end position="173"/>
    </location>
    <ligand>
        <name>GTP</name>
        <dbReference type="ChEBI" id="CHEBI:37565"/>
    </ligand>
</feature>
<feature type="binding site" evidence="1">
    <location>
        <position position="173"/>
    </location>
    <ligand>
        <name>Mg(2+)</name>
        <dbReference type="ChEBI" id="CHEBI:18420"/>
    </ligand>
</feature>
<feature type="binding site" evidence="1">
    <location>
        <begin position="191"/>
        <end position="195"/>
    </location>
    <ligand>
        <name>GTP</name>
        <dbReference type="ChEBI" id="CHEBI:37565"/>
    </ligand>
</feature>
<feature type="binding site" evidence="1">
    <location>
        <position position="193"/>
    </location>
    <ligand>
        <name>Mg(2+)</name>
        <dbReference type="ChEBI" id="CHEBI:18420"/>
    </ligand>
</feature>
<feature type="binding site" evidence="1">
    <location>
        <begin position="213"/>
        <end position="216"/>
    </location>
    <ligand>
        <name>GTP</name>
        <dbReference type="ChEBI" id="CHEBI:37565"/>
    </ligand>
</feature>
<feature type="binding site" evidence="1">
    <location>
        <begin position="280"/>
        <end position="283"/>
    </location>
    <ligand>
        <name>GTP</name>
        <dbReference type="ChEBI" id="CHEBI:37565"/>
    </ligand>
</feature>
<feature type="binding site" evidence="1">
    <location>
        <begin position="309"/>
        <end position="311"/>
    </location>
    <ligand>
        <name>GTP</name>
        <dbReference type="ChEBI" id="CHEBI:37565"/>
    </ligand>
</feature>
<sequence>MKFLDQAKIYVKSGDGGDGVIAFRREKYIEFGGPDGGNGGRGGDIIVEAVANLNTLIDFRYTQHFRAPKGGNGAGSDRTGAAAPDVLIKVPVGTQILEDDRETLIADLDVPGKRITLCRGGDGGHGNAHFKSSTNRAPRRADKGWPGEERWVWLRLKLIADAGLVGLPNAGKSTFLSVVSAARPKIADYPFTTLHPQLGVVRLSLQEEFVLADIPGLIEGAHEGAGLGDRFLGHVERCAVLIHLIDGAAGDVVKAWRTVREEMEGYGGGLTEKPEIIVLNKCDGMTPREASARRSALAKASGQTVTVISGVTGEGVQPLLRQVMTYVAQSREERRKAMSGTSA</sequence>
<protein>
    <recommendedName>
        <fullName evidence="1">GTPase Obg</fullName>
        <ecNumber evidence="1">3.6.5.-</ecNumber>
    </recommendedName>
    <alternativeName>
        <fullName evidence="1">GTP-binding protein Obg</fullName>
    </alternativeName>
</protein>
<name>OBG_GRABC</name>
<accession>Q0BRE9</accession>
<gene>
    <name evidence="1" type="primary">obg</name>
    <name type="ordered locus">GbCGDNIH1_1705</name>
</gene>
<keyword id="KW-0963">Cytoplasm</keyword>
<keyword id="KW-0342">GTP-binding</keyword>
<keyword id="KW-0378">Hydrolase</keyword>
<keyword id="KW-0460">Magnesium</keyword>
<keyword id="KW-0479">Metal-binding</keyword>
<keyword id="KW-0547">Nucleotide-binding</keyword>
<keyword id="KW-1185">Reference proteome</keyword>
<reference key="1">
    <citation type="journal article" date="2007" name="J. Bacteriol.">
        <title>Genome sequence analysis of the emerging human pathogenic acetic acid bacterium Granulibacter bethesdensis.</title>
        <authorList>
            <person name="Greenberg D.E."/>
            <person name="Porcella S.F."/>
            <person name="Zelazny A.M."/>
            <person name="Virtaneva K."/>
            <person name="Sturdevant D.E."/>
            <person name="Kupko J.J. III"/>
            <person name="Barbian K.D."/>
            <person name="Babar A."/>
            <person name="Dorward D.W."/>
            <person name="Holland S.M."/>
        </authorList>
    </citation>
    <scope>NUCLEOTIDE SEQUENCE [LARGE SCALE GENOMIC DNA]</scope>
    <source>
        <strain>ATCC BAA-1260 / CGDNIH1</strain>
    </source>
</reference>
<organism>
    <name type="scientific">Granulibacter bethesdensis (strain ATCC BAA-1260 / CGDNIH1)</name>
    <dbReference type="NCBI Taxonomy" id="391165"/>
    <lineage>
        <taxon>Bacteria</taxon>
        <taxon>Pseudomonadati</taxon>
        <taxon>Pseudomonadota</taxon>
        <taxon>Alphaproteobacteria</taxon>
        <taxon>Acetobacterales</taxon>
        <taxon>Acetobacteraceae</taxon>
        <taxon>Granulibacter</taxon>
    </lineage>
</organism>